<protein>
    <recommendedName>
        <fullName>Uncharacterized protein YwdI</fullName>
    </recommendedName>
</protein>
<reference key="1">
    <citation type="journal article" date="1993" name="Mol. Microbiol.">
        <title>Bacillus subtilis genome project: cloning and sequencing of the 97 kb region from 325 degrees to 333 degrees.</title>
        <authorList>
            <person name="Glaser P."/>
            <person name="Kunst F."/>
            <person name="Arnaud M."/>
            <person name="Coudart M.P."/>
            <person name="Gonzales W."/>
            <person name="Hullo M.-F."/>
            <person name="Ionescu M."/>
            <person name="Lubochinsky B."/>
            <person name="Marcelino L."/>
            <person name="Moszer I."/>
            <person name="Presecan E."/>
            <person name="Santana M."/>
            <person name="Schneider E."/>
            <person name="Schweizer J."/>
            <person name="Vertes A."/>
            <person name="Rapoport G."/>
            <person name="Danchin A."/>
        </authorList>
    </citation>
    <scope>NUCLEOTIDE SEQUENCE [GENOMIC DNA]</scope>
    <source>
        <strain>168</strain>
    </source>
</reference>
<reference key="2">
    <citation type="journal article" date="1997" name="Nature">
        <title>The complete genome sequence of the Gram-positive bacterium Bacillus subtilis.</title>
        <authorList>
            <person name="Kunst F."/>
            <person name="Ogasawara N."/>
            <person name="Moszer I."/>
            <person name="Albertini A.M."/>
            <person name="Alloni G."/>
            <person name="Azevedo V."/>
            <person name="Bertero M.G."/>
            <person name="Bessieres P."/>
            <person name="Bolotin A."/>
            <person name="Borchert S."/>
            <person name="Borriss R."/>
            <person name="Boursier L."/>
            <person name="Brans A."/>
            <person name="Braun M."/>
            <person name="Brignell S.C."/>
            <person name="Bron S."/>
            <person name="Brouillet S."/>
            <person name="Bruschi C.V."/>
            <person name="Caldwell B."/>
            <person name="Capuano V."/>
            <person name="Carter N.M."/>
            <person name="Choi S.-K."/>
            <person name="Codani J.-J."/>
            <person name="Connerton I.F."/>
            <person name="Cummings N.J."/>
            <person name="Daniel R.A."/>
            <person name="Denizot F."/>
            <person name="Devine K.M."/>
            <person name="Duesterhoeft A."/>
            <person name="Ehrlich S.D."/>
            <person name="Emmerson P.T."/>
            <person name="Entian K.-D."/>
            <person name="Errington J."/>
            <person name="Fabret C."/>
            <person name="Ferrari E."/>
            <person name="Foulger D."/>
            <person name="Fritz C."/>
            <person name="Fujita M."/>
            <person name="Fujita Y."/>
            <person name="Fuma S."/>
            <person name="Galizzi A."/>
            <person name="Galleron N."/>
            <person name="Ghim S.-Y."/>
            <person name="Glaser P."/>
            <person name="Goffeau A."/>
            <person name="Golightly E.J."/>
            <person name="Grandi G."/>
            <person name="Guiseppi G."/>
            <person name="Guy B.J."/>
            <person name="Haga K."/>
            <person name="Haiech J."/>
            <person name="Harwood C.R."/>
            <person name="Henaut A."/>
            <person name="Hilbert H."/>
            <person name="Holsappel S."/>
            <person name="Hosono S."/>
            <person name="Hullo M.-F."/>
            <person name="Itaya M."/>
            <person name="Jones L.-M."/>
            <person name="Joris B."/>
            <person name="Karamata D."/>
            <person name="Kasahara Y."/>
            <person name="Klaerr-Blanchard M."/>
            <person name="Klein C."/>
            <person name="Kobayashi Y."/>
            <person name="Koetter P."/>
            <person name="Koningstein G."/>
            <person name="Krogh S."/>
            <person name="Kumano M."/>
            <person name="Kurita K."/>
            <person name="Lapidus A."/>
            <person name="Lardinois S."/>
            <person name="Lauber J."/>
            <person name="Lazarevic V."/>
            <person name="Lee S.-M."/>
            <person name="Levine A."/>
            <person name="Liu H."/>
            <person name="Masuda S."/>
            <person name="Mauel C."/>
            <person name="Medigue C."/>
            <person name="Medina N."/>
            <person name="Mellado R.P."/>
            <person name="Mizuno M."/>
            <person name="Moestl D."/>
            <person name="Nakai S."/>
            <person name="Noback M."/>
            <person name="Noone D."/>
            <person name="O'Reilly M."/>
            <person name="Ogawa K."/>
            <person name="Ogiwara A."/>
            <person name="Oudega B."/>
            <person name="Park S.-H."/>
            <person name="Parro V."/>
            <person name="Pohl T.M."/>
            <person name="Portetelle D."/>
            <person name="Porwollik S."/>
            <person name="Prescott A.M."/>
            <person name="Presecan E."/>
            <person name="Pujic P."/>
            <person name="Purnelle B."/>
            <person name="Rapoport G."/>
            <person name="Rey M."/>
            <person name="Reynolds S."/>
            <person name="Rieger M."/>
            <person name="Rivolta C."/>
            <person name="Rocha E."/>
            <person name="Roche B."/>
            <person name="Rose M."/>
            <person name="Sadaie Y."/>
            <person name="Sato T."/>
            <person name="Scanlan E."/>
            <person name="Schleich S."/>
            <person name="Schroeter R."/>
            <person name="Scoffone F."/>
            <person name="Sekiguchi J."/>
            <person name="Sekowska A."/>
            <person name="Seror S.J."/>
            <person name="Serror P."/>
            <person name="Shin B.-S."/>
            <person name="Soldo B."/>
            <person name="Sorokin A."/>
            <person name="Tacconi E."/>
            <person name="Takagi T."/>
            <person name="Takahashi H."/>
            <person name="Takemaru K."/>
            <person name="Takeuchi M."/>
            <person name="Tamakoshi A."/>
            <person name="Tanaka T."/>
            <person name="Terpstra P."/>
            <person name="Tognoni A."/>
            <person name="Tosato V."/>
            <person name="Uchiyama S."/>
            <person name="Vandenbol M."/>
            <person name="Vannier F."/>
            <person name="Vassarotti A."/>
            <person name="Viari A."/>
            <person name="Wambutt R."/>
            <person name="Wedler E."/>
            <person name="Wedler H."/>
            <person name="Weitzenegger T."/>
            <person name="Winters P."/>
            <person name="Wipat A."/>
            <person name="Yamamoto H."/>
            <person name="Yamane K."/>
            <person name="Yasumoto K."/>
            <person name="Yata K."/>
            <person name="Yoshida K."/>
            <person name="Yoshikawa H.-F."/>
            <person name="Zumstein E."/>
            <person name="Yoshikawa H."/>
            <person name="Danchin A."/>
        </authorList>
    </citation>
    <scope>NUCLEOTIDE SEQUENCE [LARGE SCALE GENOMIC DNA]</scope>
    <source>
        <strain>168</strain>
    </source>
</reference>
<reference key="3">
    <citation type="journal article" date="2003" name="Mol. Microbiol.">
        <title>Identification of additional TnrA-regulated genes of Bacillus subtilis associated with a TnrA box.</title>
        <authorList>
            <person name="Yoshida K."/>
            <person name="Yamaguchi H."/>
            <person name="Kinehara M."/>
            <person name="Ohki Y.-H."/>
            <person name="Nakaura Y."/>
            <person name="Fujita Y."/>
        </authorList>
    </citation>
    <scope>REGULATION BY TNRA</scope>
</reference>
<sequence length="105" mass="11823">MNIHISALIQKMEEELKKAKTAERDEELKRYVAVVRSLCDVVLDQPENASAPRIQPSVTPSPAAPPSTDQLMMEKMMGSAGLNKYRKQEKEKQEEDGNGESLFDF</sequence>
<organism>
    <name type="scientific">Bacillus subtilis (strain 168)</name>
    <dbReference type="NCBI Taxonomy" id="224308"/>
    <lineage>
        <taxon>Bacteria</taxon>
        <taxon>Bacillati</taxon>
        <taxon>Bacillota</taxon>
        <taxon>Bacilli</taxon>
        <taxon>Bacillales</taxon>
        <taxon>Bacillaceae</taxon>
        <taxon>Bacillus</taxon>
    </lineage>
</organism>
<name>YWDI_BACSU</name>
<gene>
    <name type="primary">ywdI</name>
    <name type="ordered locus">BSU37950</name>
    <name type="ORF">ipa-59d</name>
</gene>
<dbReference type="EMBL" id="X73124">
    <property type="protein sequence ID" value="CAA51615.1"/>
    <property type="molecule type" value="Genomic_DNA"/>
</dbReference>
<dbReference type="EMBL" id="AL009126">
    <property type="protein sequence ID" value="CAB15821.3"/>
    <property type="molecule type" value="Genomic_DNA"/>
</dbReference>
<dbReference type="PIR" id="S39714">
    <property type="entry name" value="S39714"/>
</dbReference>
<dbReference type="RefSeq" id="NP_391674.3">
    <property type="nucleotide sequence ID" value="NC_000964.3"/>
</dbReference>
<dbReference type="RefSeq" id="WP_003243806.1">
    <property type="nucleotide sequence ID" value="NZ_OZ025638.1"/>
</dbReference>
<dbReference type="SMR" id="P39617"/>
<dbReference type="FunCoup" id="P39617">
    <property type="interactions" value="27"/>
</dbReference>
<dbReference type="IntAct" id="P39617">
    <property type="interactions" value="1"/>
</dbReference>
<dbReference type="STRING" id="224308.BSU37950"/>
<dbReference type="PaxDb" id="224308-BSU37950"/>
<dbReference type="EnsemblBacteria" id="CAB15821">
    <property type="protein sequence ID" value="CAB15821"/>
    <property type="gene ID" value="BSU_37950"/>
</dbReference>
<dbReference type="GeneID" id="937251"/>
<dbReference type="KEGG" id="bsu:BSU37950"/>
<dbReference type="PATRIC" id="fig|224308.179.peg.4109"/>
<dbReference type="eggNOG" id="ENOG5033C32">
    <property type="taxonomic scope" value="Bacteria"/>
</dbReference>
<dbReference type="InParanoid" id="P39617"/>
<dbReference type="OrthoDB" id="2361717at2"/>
<dbReference type="BioCyc" id="BSUB:BSU37950-MONOMER"/>
<dbReference type="Proteomes" id="UP000001570">
    <property type="component" value="Chromosome"/>
</dbReference>
<dbReference type="InterPro" id="IPR035218">
    <property type="entry name" value="DUF5327"/>
</dbReference>
<dbReference type="Pfam" id="PF17261">
    <property type="entry name" value="DUF5327"/>
    <property type="match status" value="1"/>
</dbReference>
<feature type="chain" id="PRO_0000049966" description="Uncharacterized protein YwdI">
    <location>
        <begin position="1"/>
        <end position="105"/>
    </location>
</feature>
<feature type="region of interest" description="Disordered" evidence="1">
    <location>
        <begin position="47"/>
        <end position="105"/>
    </location>
</feature>
<feature type="compositionally biased region" description="Basic and acidic residues" evidence="1">
    <location>
        <begin position="86"/>
        <end position="95"/>
    </location>
</feature>
<evidence type="ECO:0000256" key="1">
    <source>
        <dbReference type="SAM" id="MobiDB-lite"/>
    </source>
</evidence>
<accession>P39617</accession>
<comment type="induction">
    <text>Negatively regulated by TnrA under nitrogen-limited conditions.</text>
</comment>
<keyword id="KW-1185">Reference proteome</keyword>
<proteinExistence type="evidence at transcript level"/>